<name>PURT_XANE5</name>
<evidence type="ECO:0000255" key="1">
    <source>
        <dbReference type="HAMAP-Rule" id="MF_01643"/>
    </source>
</evidence>
<keyword id="KW-0067">ATP-binding</keyword>
<keyword id="KW-0436">Ligase</keyword>
<keyword id="KW-0460">Magnesium</keyword>
<keyword id="KW-0479">Metal-binding</keyword>
<keyword id="KW-0547">Nucleotide-binding</keyword>
<keyword id="KW-0658">Purine biosynthesis</keyword>
<organism>
    <name type="scientific">Xanthomonas euvesicatoria pv. vesicatoria (strain 85-10)</name>
    <name type="common">Xanthomonas campestris pv. vesicatoria</name>
    <dbReference type="NCBI Taxonomy" id="316273"/>
    <lineage>
        <taxon>Bacteria</taxon>
        <taxon>Pseudomonadati</taxon>
        <taxon>Pseudomonadota</taxon>
        <taxon>Gammaproteobacteria</taxon>
        <taxon>Lysobacterales</taxon>
        <taxon>Lysobacteraceae</taxon>
        <taxon>Xanthomonas</taxon>
    </lineage>
</organism>
<accession>Q3BW63</accession>
<feature type="chain" id="PRO_0000319267" description="Formate-dependent phosphoribosylglycinamide formyltransferase">
    <location>
        <begin position="1"/>
        <end position="400"/>
    </location>
</feature>
<feature type="domain" description="ATP-grasp" evidence="1">
    <location>
        <begin position="120"/>
        <end position="309"/>
    </location>
</feature>
<feature type="binding site" evidence="1">
    <location>
        <begin position="22"/>
        <end position="23"/>
    </location>
    <ligand>
        <name>N(1)-(5-phospho-beta-D-ribosyl)glycinamide</name>
        <dbReference type="ChEBI" id="CHEBI:143788"/>
    </ligand>
</feature>
<feature type="binding site" evidence="1">
    <location>
        <position position="82"/>
    </location>
    <ligand>
        <name>N(1)-(5-phospho-beta-D-ribosyl)glycinamide</name>
        <dbReference type="ChEBI" id="CHEBI:143788"/>
    </ligand>
</feature>
<feature type="binding site" evidence="1">
    <location>
        <position position="115"/>
    </location>
    <ligand>
        <name>ATP</name>
        <dbReference type="ChEBI" id="CHEBI:30616"/>
    </ligand>
</feature>
<feature type="binding site" evidence="1">
    <location>
        <position position="156"/>
    </location>
    <ligand>
        <name>ATP</name>
        <dbReference type="ChEBI" id="CHEBI:30616"/>
    </ligand>
</feature>
<feature type="binding site" evidence="1">
    <location>
        <begin position="161"/>
        <end position="166"/>
    </location>
    <ligand>
        <name>ATP</name>
        <dbReference type="ChEBI" id="CHEBI:30616"/>
    </ligand>
</feature>
<feature type="binding site" evidence="1">
    <location>
        <begin position="196"/>
        <end position="199"/>
    </location>
    <ligand>
        <name>ATP</name>
        <dbReference type="ChEBI" id="CHEBI:30616"/>
    </ligand>
</feature>
<feature type="binding site" evidence="1">
    <location>
        <position position="204"/>
    </location>
    <ligand>
        <name>ATP</name>
        <dbReference type="ChEBI" id="CHEBI:30616"/>
    </ligand>
</feature>
<feature type="binding site" evidence="1">
    <location>
        <position position="268"/>
    </location>
    <ligand>
        <name>Mg(2+)</name>
        <dbReference type="ChEBI" id="CHEBI:18420"/>
    </ligand>
</feature>
<feature type="binding site" evidence="1">
    <location>
        <position position="280"/>
    </location>
    <ligand>
        <name>Mg(2+)</name>
        <dbReference type="ChEBI" id="CHEBI:18420"/>
    </ligand>
</feature>
<feature type="binding site" evidence="1">
    <location>
        <position position="287"/>
    </location>
    <ligand>
        <name>N(1)-(5-phospho-beta-D-ribosyl)glycinamide</name>
        <dbReference type="ChEBI" id="CHEBI:143788"/>
    </ligand>
</feature>
<feature type="binding site" evidence="1">
    <location>
        <position position="361"/>
    </location>
    <ligand>
        <name>N(1)-(5-phospho-beta-D-ribosyl)glycinamide</name>
        <dbReference type="ChEBI" id="CHEBI:143788"/>
    </ligand>
</feature>
<feature type="binding site" evidence="1">
    <location>
        <begin position="368"/>
        <end position="369"/>
    </location>
    <ligand>
        <name>N(1)-(5-phospho-beta-D-ribosyl)glycinamide</name>
        <dbReference type="ChEBI" id="CHEBI:143788"/>
    </ligand>
</feature>
<dbReference type="EC" id="6.3.1.21" evidence="1"/>
<dbReference type="EMBL" id="AM039952">
    <property type="protein sequence ID" value="CAJ22900.1"/>
    <property type="molecule type" value="Genomic_DNA"/>
</dbReference>
<dbReference type="RefSeq" id="WP_011346738.1">
    <property type="nucleotide sequence ID" value="NZ_CP017190.1"/>
</dbReference>
<dbReference type="SMR" id="Q3BW63"/>
<dbReference type="STRING" id="456327.BJD11_16265"/>
<dbReference type="GeneID" id="63990487"/>
<dbReference type="KEGG" id="xcv:XCV1269"/>
<dbReference type="eggNOG" id="COG0027">
    <property type="taxonomic scope" value="Bacteria"/>
</dbReference>
<dbReference type="HOGENOM" id="CLU_011534_1_3_6"/>
<dbReference type="UniPathway" id="UPA00074">
    <property type="reaction ID" value="UER00127"/>
</dbReference>
<dbReference type="Proteomes" id="UP000007069">
    <property type="component" value="Chromosome"/>
</dbReference>
<dbReference type="GO" id="GO:0005829">
    <property type="term" value="C:cytosol"/>
    <property type="evidence" value="ECO:0007669"/>
    <property type="project" value="TreeGrafter"/>
</dbReference>
<dbReference type="GO" id="GO:0005524">
    <property type="term" value="F:ATP binding"/>
    <property type="evidence" value="ECO:0007669"/>
    <property type="project" value="UniProtKB-UniRule"/>
</dbReference>
<dbReference type="GO" id="GO:0000287">
    <property type="term" value="F:magnesium ion binding"/>
    <property type="evidence" value="ECO:0007669"/>
    <property type="project" value="InterPro"/>
</dbReference>
<dbReference type="GO" id="GO:0043815">
    <property type="term" value="F:phosphoribosylglycinamide formyltransferase 2 activity"/>
    <property type="evidence" value="ECO:0007669"/>
    <property type="project" value="UniProtKB-UniRule"/>
</dbReference>
<dbReference type="GO" id="GO:0004644">
    <property type="term" value="F:phosphoribosylglycinamide formyltransferase activity"/>
    <property type="evidence" value="ECO:0007669"/>
    <property type="project" value="InterPro"/>
</dbReference>
<dbReference type="GO" id="GO:0006189">
    <property type="term" value="P:'de novo' IMP biosynthetic process"/>
    <property type="evidence" value="ECO:0007669"/>
    <property type="project" value="UniProtKB-UniRule"/>
</dbReference>
<dbReference type="FunFam" id="3.30.1490.20:FF:000013">
    <property type="entry name" value="Formate-dependent phosphoribosylglycinamide formyltransferase"/>
    <property type="match status" value="1"/>
</dbReference>
<dbReference type="FunFam" id="3.30.470.20:FF:000027">
    <property type="entry name" value="Formate-dependent phosphoribosylglycinamide formyltransferase"/>
    <property type="match status" value="1"/>
</dbReference>
<dbReference type="FunFam" id="3.40.50.20:FF:000007">
    <property type="entry name" value="Formate-dependent phosphoribosylglycinamide formyltransferase"/>
    <property type="match status" value="1"/>
</dbReference>
<dbReference type="Gene3D" id="3.40.50.20">
    <property type="match status" value="1"/>
</dbReference>
<dbReference type="Gene3D" id="3.30.1490.20">
    <property type="entry name" value="ATP-grasp fold, A domain"/>
    <property type="match status" value="1"/>
</dbReference>
<dbReference type="Gene3D" id="3.30.470.20">
    <property type="entry name" value="ATP-grasp fold, B domain"/>
    <property type="match status" value="1"/>
</dbReference>
<dbReference type="HAMAP" id="MF_01643">
    <property type="entry name" value="PurT"/>
    <property type="match status" value="1"/>
</dbReference>
<dbReference type="InterPro" id="IPR011761">
    <property type="entry name" value="ATP-grasp"/>
</dbReference>
<dbReference type="InterPro" id="IPR003135">
    <property type="entry name" value="ATP-grasp_carboxylate-amine"/>
</dbReference>
<dbReference type="InterPro" id="IPR013815">
    <property type="entry name" value="ATP_grasp_subdomain_1"/>
</dbReference>
<dbReference type="InterPro" id="IPR016185">
    <property type="entry name" value="PreATP-grasp_dom_sf"/>
</dbReference>
<dbReference type="InterPro" id="IPR005862">
    <property type="entry name" value="PurT"/>
</dbReference>
<dbReference type="InterPro" id="IPR054350">
    <property type="entry name" value="PurT/PurK_preATP-grasp"/>
</dbReference>
<dbReference type="InterPro" id="IPR048740">
    <property type="entry name" value="PurT_C"/>
</dbReference>
<dbReference type="InterPro" id="IPR011054">
    <property type="entry name" value="Rudment_hybrid_motif"/>
</dbReference>
<dbReference type="NCBIfam" id="NF006766">
    <property type="entry name" value="PRK09288.1"/>
    <property type="match status" value="1"/>
</dbReference>
<dbReference type="NCBIfam" id="TIGR01142">
    <property type="entry name" value="purT"/>
    <property type="match status" value="1"/>
</dbReference>
<dbReference type="PANTHER" id="PTHR43055">
    <property type="entry name" value="FORMATE-DEPENDENT PHOSPHORIBOSYLGLYCINAMIDE FORMYLTRANSFERASE"/>
    <property type="match status" value="1"/>
</dbReference>
<dbReference type="PANTHER" id="PTHR43055:SF1">
    <property type="entry name" value="FORMATE-DEPENDENT PHOSPHORIBOSYLGLYCINAMIDE FORMYLTRANSFERASE"/>
    <property type="match status" value="1"/>
</dbReference>
<dbReference type="Pfam" id="PF02222">
    <property type="entry name" value="ATP-grasp"/>
    <property type="match status" value="1"/>
</dbReference>
<dbReference type="Pfam" id="PF21244">
    <property type="entry name" value="PurT_C"/>
    <property type="match status" value="1"/>
</dbReference>
<dbReference type="Pfam" id="PF22660">
    <property type="entry name" value="RS_preATP-grasp-like"/>
    <property type="match status" value="1"/>
</dbReference>
<dbReference type="SUPFAM" id="SSF56059">
    <property type="entry name" value="Glutathione synthetase ATP-binding domain-like"/>
    <property type="match status" value="1"/>
</dbReference>
<dbReference type="SUPFAM" id="SSF52440">
    <property type="entry name" value="PreATP-grasp domain"/>
    <property type="match status" value="1"/>
</dbReference>
<dbReference type="SUPFAM" id="SSF51246">
    <property type="entry name" value="Rudiment single hybrid motif"/>
    <property type="match status" value="1"/>
</dbReference>
<dbReference type="PROSITE" id="PS50975">
    <property type="entry name" value="ATP_GRASP"/>
    <property type="match status" value="1"/>
</dbReference>
<gene>
    <name evidence="1" type="primary">purT</name>
    <name type="ordered locus">XCV1269</name>
</gene>
<sequence>MTTFGTPLSPSATRVLLLGSGELGKEVAIELQRFGVEVIAADRYANAPAMQVAHRSHVLDMLDPAALRALIASEQPHLIVPEIEAIHTETLVALEREQGQKVIPTARAARLTMDREGIRRLAAETLCLPTSPYRFVDTVEEYRNAIAAVGVPCVVKPVMSSSGKGQSTLRSEADIDAAWAYAQTGGRAGAGRCIVEGFIDFDYEITLLTVRHAGGTSYCDPIGHWQQDGDYRESWQPQPMSAAALRRSQEIAKAITDELGGWGLFGVELFVKGDEVWFSEVSPRPHDTGLVTLVSQDLSEFALHARAILGLPVGAQDGGVIRQAGPSASCALLAHGNGVPVFDNVAEALRDPDTALRLFGKPRVDGHRRVGVTLARADSIDAAREKARVAAAALTIQLQA</sequence>
<proteinExistence type="inferred from homology"/>
<comment type="function">
    <text evidence="1">Involved in the de novo purine biosynthesis. Catalyzes the transfer of formate to 5-phospho-ribosyl-glycinamide (GAR), producing 5-phospho-ribosyl-N-formylglycinamide (FGAR). Formate is provided by PurU via hydrolysis of 10-formyl-tetrahydrofolate.</text>
</comment>
<comment type="catalytic activity">
    <reaction evidence="1">
        <text>N(1)-(5-phospho-beta-D-ribosyl)glycinamide + formate + ATP = N(2)-formyl-N(1)-(5-phospho-beta-D-ribosyl)glycinamide + ADP + phosphate + H(+)</text>
        <dbReference type="Rhea" id="RHEA:24829"/>
        <dbReference type="ChEBI" id="CHEBI:15378"/>
        <dbReference type="ChEBI" id="CHEBI:15740"/>
        <dbReference type="ChEBI" id="CHEBI:30616"/>
        <dbReference type="ChEBI" id="CHEBI:43474"/>
        <dbReference type="ChEBI" id="CHEBI:143788"/>
        <dbReference type="ChEBI" id="CHEBI:147286"/>
        <dbReference type="ChEBI" id="CHEBI:456216"/>
        <dbReference type="EC" id="6.3.1.21"/>
    </reaction>
    <physiologicalReaction direction="left-to-right" evidence="1">
        <dbReference type="Rhea" id="RHEA:24830"/>
    </physiologicalReaction>
</comment>
<comment type="pathway">
    <text evidence="1">Purine metabolism; IMP biosynthesis via de novo pathway; N(2)-formyl-N(1)-(5-phospho-D-ribosyl)glycinamide from N(1)-(5-phospho-D-ribosyl)glycinamide (formate route): step 1/1.</text>
</comment>
<comment type="subunit">
    <text evidence="1">Homodimer.</text>
</comment>
<comment type="similarity">
    <text evidence="1">Belongs to the PurK/PurT family.</text>
</comment>
<protein>
    <recommendedName>
        <fullName evidence="1">Formate-dependent phosphoribosylglycinamide formyltransferase</fullName>
        <ecNumber evidence="1">6.3.1.21</ecNumber>
    </recommendedName>
    <alternativeName>
        <fullName evidence="1">5'-phosphoribosylglycinamide transformylase 2</fullName>
    </alternativeName>
    <alternativeName>
        <fullName evidence="1">Formate-dependent GAR transformylase</fullName>
    </alternativeName>
    <alternativeName>
        <fullName evidence="1">GAR transformylase 2</fullName>
        <shortName evidence="1">GART 2</shortName>
    </alternativeName>
    <alternativeName>
        <fullName evidence="1">Non-folate glycinamide ribonucleotide transformylase</fullName>
    </alternativeName>
    <alternativeName>
        <fullName evidence="1">Phosphoribosylglycinamide formyltransferase 2</fullName>
    </alternativeName>
</protein>
<reference key="1">
    <citation type="journal article" date="2005" name="J. Bacteriol.">
        <title>Insights into genome plasticity and pathogenicity of the plant pathogenic Bacterium Xanthomonas campestris pv. vesicatoria revealed by the complete genome sequence.</title>
        <authorList>
            <person name="Thieme F."/>
            <person name="Koebnik R."/>
            <person name="Bekel T."/>
            <person name="Berger C."/>
            <person name="Boch J."/>
            <person name="Buettner D."/>
            <person name="Caldana C."/>
            <person name="Gaigalat L."/>
            <person name="Goesmann A."/>
            <person name="Kay S."/>
            <person name="Kirchner O."/>
            <person name="Lanz C."/>
            <person name="Linke B."/>
            <person name="McHardy A.C."/>
            <person name="Meyer F."/>
            <person name="Mittenhuber G."/>
            <person name="Nies D.H."/>
            <person name="Niesbach-Kloesgen U."/>
            <person name="Patschkowski T."/>
            <person name="Rueckert C."/>
            <person name="Rupp O."/>
            <person name="Schneiker S."/>
            <person name="Schuster S.C."/>
            <person name="Vorhoelter F.J."/>
            <person name="Weber E."/>
            <person name="Puehler A."/>
            <person name="Bonas U."/>
            <person name="Bartels D."/>
            <person name="Kaiser O."/>
        </authorList>
    </citation>
    <scope>NUCLEOTIDE SEQUENCE [LARGE SCALE GENOMIC DNA]</scope>
    <source>
        <strain>85-10</strain>
    </source>
</reference>